<organism>
    <name type="scientific">Chlorokybus atmophyticus</name>
    <name type="common">Soil alga</name>
    <dbReference type="NCBI Taxonomy" id="3144"/>
    <lineage>
        <taxon>Eukaryota</taxon>
        <taxon>Viridiplantae</taxon>
        <taxon>Streptophyta</taxon>
        <taxon>Chlorokybophyceae</taxon>
        <taxon>Chlorokybales</taxon>
        <taxon>Chlorokybaceae</taxon>
        <taxon>Chlorokybus</taxon>
    </lineage>
</organism>
<proteinExistence type="inferred from homology"/>
<accession>Q19VC3</accession>
<comment type="function">
    <text evidence="1">Cleaves peptides in various proteins in a process that requires ATP hydrolysis. Has a chymotrypsin-like activity. Plays a major role in the degradation of misfolded proteins.</text>
</comment>
<comment type="catalytic activity">
    <reaction evidence="1">
        <text>Hydrolysis of proteins to small peptides in the presence of ATP and magnesium. alpha-casein is the usual test substrate. In the absence of ATP, only oligopeptides shorter than five residues are hydrolyzed (such as succinyl-Leu-Tyr-|-NHMec, and Leu-Tyr-Leu-|-Tyr-Trp, in which cleavage of the -Tyr-|-Leu- and -Tyr-|-Trp bonds also occurs).</text>
        <dbReference type="EC" id="3.4.21.92"/>
    </reaction>
</comment>
<comment type="subunit">
    <text>Component of the chloroplastic Clp protease core complex.</text>
</comment>
<comment type="subcellular location">
    <subcellularLocation>
        <location evidence="1">Plastid</location>
        <location evidence="1">Chloroplast stroma</location>
    </subcellularLocation>
</comment>
<comment type="similarity">
    <text evidence="1">Belongs to the peptidase S14 family.</text>
</comment>
<gene>
    <name evidence="1" type="primary">clpP</name>
</gene>
<geneLocation type="chloroplast"/>
<keyword id="KW-0150">Chloroplast</keyword>
<keyword id="KW-0378">Hydrolase</keyword>
<keyword id="KW-0934">Plastid</keyword>
<keyword id="KW-0645">Protease</keyword>
<keyword id="KW-0720">Serine protease</keyword>
<reference key="1">
    <citation type="journal article" date="2007" name="BMC Biol.">
        <title>A clade uniting the green algae Mesostigma viride and Chlorokybus atmophyticus represents the deepest branch of the Streptophyta in chloroplast genome-based phylogenies.</title>
        <authorList>
            <person name="Lemieux C."/>
            <person name="Otis C."/>
            <person name="Turmel M."/>
        </authorList>
    </citation>
    <scope>NUCLEOTIDE SEQUENCE [LARGE SCALE GENOMIC DNA]</scope>
    <source>
        <strain>SAG 48.80</strain>
    </source>
</reference>
<name>CLPP_CHLAT</name>
<dbReference type="EC" id="3.4.21.92" evidence="1"/>
<dbReference type="EMBL" id="DQ422812">
    <property type="protein sequence ID" value="ABD62181.2"/>
    <property type="molecule type" value="Genomic_DNA"/>
</dbReference>
<dbReference type="RefSeq" id="YP_001019072.1">
    <property type="nucleotide sequence ID" value="NC_008822.1"/>
</dbReference>
<dbReference type="SMR" id="Q19VC3"/>
<dbReference type="MEROPS" id="S14.002"/>
<dbReference type="GeneID" id="4783277"/>
<dbReference type="GO" id="GO:0009570">
    <property type="term" value="C:chloroplast stroma"/>
    <property type="evidence" value="ECO:0007669"/>
    <property type="project" value="UniProtKB-SubCell"/>
</dbReference>
<dbReference type="GO" id="GO:0009368">
    <property type="term" value="C:endopeptidase Clp complex"/>
    <property type="evidence" value="ECO:0007669"/>
    <property type="project" value="TreeGrafter"/>
</dbReference>
<dbReference type="GO" id="GO:0004176">
    <property type="term" value="F:ATP-dependent peptidase activity"/>
    <property type="evidence" value="ECO:0007669"/>
    <property type="project" value="InterPro"/>
</dbReference>
<dbReference type="GO" id="GO:0051117">
    <property type="term" value="F:ATPase binding"/>
    <property type="evidence" value="ECO:0007669"/>
    <property type="project" value="TreeGrafter"/>
</dbReference>
<dbReference type="GO" id="GO:0004252">
    <property type="term" value="F:serine-type endopeptidase activity"/>
    <property type="evidence" value="ECO:0007669"/>
    <property type="project" value="UniProtKB-UniRule"/>
</dbReference>
<dbReference type="GO" id="GO:0006515">
    <property type="term" value="P:protein quality control for misfolded or incompletely synthesized proteins"/>
    <property type="evidence" value="ECO:0007669"/>
    <property type="project" value="TreeGrafter"/>
</dbReference>
<dbReference type="CDD" id="cd07017">
    <property type="entry name" value="S14_ClpP_2"/>
    <property type="match status" value="1"/>
</dbReference>
<dbReference type="Gene3D" id="3.90.226.10">
    <property type="entry name" value="2-enoyl-CoA Hydratase, Chain A, domain 1"/>
    <property type="match status" value="1"/>
</dbReference>
<dbReference type="HAMAP" id="MF_00444">
    <property type="entry name" value="ClpP"/>
    <property type="match status" value="1"/>
</dbReference>
<dbReference type="InterPro" id="IPR001907">
    <property type="entry name" value="ClpP"/>
</dbReference>
<dbReference type="InterPro" id="IPR029045">
    <property type="entry name" value="ClpP/crotonase-like_dom_sf"/>
</dbReference>
<dbReference type="InterPro" id="IPR023562">
    <property type="entry name" value="ClpP/TepA"/>
</dbReference>
<dbReference type="InterPro" id="IPR033135">
    <property type="entry name" value="ClpP_His_AS"/>
</dbReference>
<dbReference type="InterPro" id="IPR018215">
    <property type="entry name" value="ClpP_Ser_AS"/>
</dbReference>
<dbReference type="PANTHER" id="PTHR10381">
    <property type="entry name" value="ATP-DEPENDENT CLP PROTEASE PROTEOLYTIC SUBUNIT"/>
    <property type="match status" value="1"/>
</dbReference>
<dbReference type="PANTHER" id="PTHR10381:SF15">
    <property type="entry name" value="CHLOROPLASTIC ATP-DEPENDENT CLP PROTEASE PROTEOLYTIC SUBUNIT 1"/>
    <property type="match status" value="1"/>
</dbReference>
<dbReference type="Pfam" id="PF00574">
    <property type="entry name" value="CLP_protease"/>
    <property type="match status" value="1"/>
</dbReference>
<dbReference type="PRINTS" id="PR00127">
    <property type="entry name" value="CLPPROTEASEP"/>
</dbReference>
<dbReference type="SUPFAM" id="SSF52096">
    <property type="entry name" value="ClpP/crotonase"/>
    <property type="match status" value="1"/>
</dbReference>
<dbReference type="PROSITE" id="PS00382">
    <property type="entry name" value="CLP_PROTEASE_HIS"/>
    <property type="match status" value="1"/>
</dbReference>
<dbReference type="PROSITE" id="PS00381">
    <property type="entry name" value="CLP_PROTEASE_SER"/>
    <property type="match status" value="1"/>
</dbReference>
<sequence length="225" mass="25228">MPIGIPKVAYRIPGESVSTYVDVYNRLYRERILFLGEDLDDEVANQLIGVMVFLNSEDDTKGIFFYINSPGGSMNSGLGVYDMIQHINVDVTTICMGLAASMASFILAGGTPGQRLMFPHARVMLHQPMGGNGGKAKYMVEESVEVKRLRELIAHLYAKRTGQPIERIRIDMNRDNFMRPRAAKEYGLIDHMITHITELDELEKDASDLRRFGGVDLTKLNKQGS</sequence>
<feature type="chain" id="PRO_0000309294" description="ATP-dependent Clp protease proteolytic subunit">
    <location>
        <begin position="1"/>
        <end position="225"/>
    </location>
</feature>
<feature type="active site" description="Nucleophile" evidence="1">
    <location>
        <position position="101"/>
    </location>
</feature>
<feature type="active site" evidence="1">
    <location>
        <position position="126"/>
    </location>
</feature>
<evidence type="ECO:0000255" key="1">
    <source>
        <dbReference type="HAMAP-Rule" id="MF_00444"/>
    </source>
</evidence>
<protein>
    <recommendedName>
        <fullName evidence="1">ATP-dependent Clp protease proteolytic subunit</fullName>
        <ecNumber evidence="1">3.4.21.92</ecNumber>
    </recommendedName>
    <alternativeName>
        <fullName evidence="1">Endopeptidase Clp</fullName>
    </alternativeName>
</protein>